<reference key="1">
    <citation type="journal article" date="1999" name="Appl. Environ. Microbiol.">
        <title>Molecular karyotype of the white rot fungus Pleurotus ostreatus.</title>
        <authorList>
            <person name="Larraya L.M."/>
            <person name="Perez G."/>
            <person name="Penas M.M."/>
            <person name="Baars J.J."/>
            <person name="Mikosch T.S."/>
            <person name="Pisabarro A.G."/>
            <person name="Ramirez L."/>
        </authorList>
    </citation>
    <scope>NUCLEOTIDE SEQUENCE [MRNA]</scope>
</reference>
<reference key="2">
    <citation type="journal article" date="2002" name="Appl. Environ. Microbiol.">
        <title>Differentially regulated, vegetative-mycelium-specific hydrophobins of the edible basidiomycete Pleurotus ostreatus.</title>
        <authorList>
            <person name="Penas M.M."/>
            <person name="Rust B."/>
            <person name="Larraya L.M."/>
            <person name="Ramirez L."/>
            <person name="Pisabarro A.G."/>
        </authorList>
    </citation>
    <scope>DEVELOPMENTAL STAGE</scope>
    <scope>INDUCTION</scope>
    <scope>SUBCELLULAR LOCATION</scope>
</reference>
<proteinExistence type="evidence at transcript level"/>
<keyword id="KW-0134">Cell wall</keyword>
<keyword id="KW-1015">Disulfide bond</keyword>
<keyword id="KW-0325">Glycoprotein</keyword>
<keyword id="KW-0964">Secreted</keyword>
<keyword id="KW-0732">Signal</keyword>
<sequence>MLFKQAILVATTLTDLAVATPVVDVRRRTDPASSCSTGTLNCCNSSGTVEDKTIAGLLGILNIVVSDITALVGITCTPITVVGAGGTSCTSQTLCCDNNNFSGLITLGCIPININL</sequence>
<gene>
    <name evidence="5" type="primary">vmh1</name>
</gene>
<protein>
    <recommendedName>
        <fullName evidence="5">Class I hydrophobin 1</fullName>
    </recommendedName>
</protein>
<evidence type="ECO:0000250" key="1">
    <source>
        <dbReference type="UniProtKB" id="Q04571"/>
    </source>
</evidence>
<evidence type="ECO:0000255" key="2"/>
<evidence type="ECO:0000255" key="3">
    <source>
        <dbReference type="PROSITE-ProRule" id="PRU00498"/>
    </source>
</evidence>
<evidence type="ECO:0000269" key="4">
    <source>
    </source>
</evidence>
<evidence type="ECO:0000303" key="5">
    <source>
    </source>
</evidence>
<evidence type="ECO:0000305" key="6"/>
<accession>Q9Y7G9</accession>
<comment type="function">
    <text evidence="6">Aerial growth, conidiation, and dispersal of filamentous fungi in the environment rely upon a capability of their secreting small amphipathic proteins called hydrophobins (HPBs) with low sequence identity. Class I can self-assemble into an outermost layer of rodlet bundles on aerial cell surfaces, conferring cellular hydrophobicity that supports fungal growth, development and dispersal; whereas Class II form highly ordered films at water-air interfaces through intermolecular interactions but contribute nothing to the rodlet structure.</text>
</comment>
<comment type="subunit">
    <text evidence="1">Self-assembles to form functional amyloid fibrils called rodlets. Self-assembly into fibrillar rodlets occurs spontaneously at hydrophobic:hydrophilic interfaces and the rodlets further associate laterally to form amphipathic monolayers.</text>
</comment>
<comment type="subcellular location">
    <subcellularLocation>
        <location evidence="4">Secreted</location>
    </subcellularLocation>
    <subcellularLocation>
        <location evidence="4">Secreted</location>
        <location evidence="4">Cell wall</location>
    </subcellularLocation>
</comment>
<comment type="developmental stage">
    <text evidence="4">Expressed only at the vegetative stage.</text>
</comment>
<comment type="induction">
    <text evidence="4">Expression is increased by carbon source limitation.</text>
</comment>
<comment type="similarity">
    <text evidence="6">Belongs to the fungal hydrophobin family.</text>
</comment>
<feature type="signal peptide" evidence="2">
    <location>
        <begin position="1"/>
        <end position="19"/>
    </location>
</feature>
<feature type="chain" id="PRO_5013985110" description="Class I hydrophobin 1">
    <location>
        <begin position="20"/>
        <end position="116"/>
    </location>
</feature>
<feature type="glycosylation site" description="N-linked (GlcNAc...) asparagine" evidence="3">
    <location>
        <position position="44"/>
    </location>
</feature>
<feature type="glycosylation site" description="N-linked (GlcNAc...) asparagine" evidence="3">
    <location>
        <position position="100"/>
    </location>
</feature>
<feature type="disulfide bond" evidence="1">
    <location>
        <begin position="35"/>
        <end position="95"/>
    </location>
</feature>
<feature type="disulfide bond" evidence="1">
    <location>
        <begin position="42"/>
        <end position="89"/>
    </location>
</feature>
<feature type="disulfide bond" evidence="1">
    <location>
        <begin position="43"/>
        <end position="76"/>
    </location>
</feature>
<feature type="disulfide bond" evidence="1">
    <location>
        <begin position="96"/>
        <end position="109"/>
    </location>
</feature>
<name>VMH1_PLEOS</name>
<organism>
    <name type="scientific">Pleurotus ostreatus</name>
    <name type="common">Oyster mushroom</name>
    <name type="synonym">White-rot fungus</name>
    <dbReference type="NCBI Taxonomy" id="5322"/>
    <lineage>
        <taxon>Eukaryota</taxon>
        <taxon>Fungi</taxon>
        <taxon>Dikarya</taxon>
        <taxon>Basidiomycota</taxon>
        <taxon>Agaricomycotina</taxon>
        <taxon>Agaricomycetes</taxon>
        <taxon>Agaricomycetidae</taxon>
        <taxon>Agaricales</taxon>
        <taxon>Pleurotineae</taxon>
        <taxon>Pleurotaceae</taxon>
        <taxon>Pleurotus</taxon>
    </lineage>
</organism>
<dbReference type="EMBL" id="AJ238147">
    <property type="protein sequence ID" value="CAB41405.1"/>
    <property type="molecule type" value="mRNA"/>
</dbReference>
<dbReference type="VEuPathDB" id="FungiDB:PC9H_001539"/>
<dbReference type="VEuPathDB" id="FungiDB:PLEOSDRAFT_1061626"/>
<dbReference type="GO" id="GO:0005576">
    <property type="term" value="C:extracellular region"/>
    <property type="evidence" value="ECO:0007669"/>
    <property type="project" value="UniProtKB-KW"/>
</dbReference>
<dbReference type="GO" id="GO:0009277">
    <property type="term" value="C:fungal-type cell wall"/>
    <property type="evidence" value="ECO:0007669"/>
    <property type="project" value="InterPro"/>
</dbReference>
<dbReference type="GO" id="GO:0005199">
    <property type="term" value="F:structural constituent of cell wall"/>
    <property type="evidence" value="ECO:0007669"/>
    <property type="project" value="InterPro"/>
</dbReference>
<dbReference type="CDD" id="cd23507">
    <property type="entry name" value="hydrophobin_I"/>
    <property type="match status" value="1"/>
</dbReference>
<dbReference type="InterPro" id="IPR001338">
    <property type="entry name" value="Hydrophobin"/>
</dbReference>
<dbReference type="Pfam" id="PF01185">
    <property type="entry name" value="Hydrophobin"/>
    <property type="match status" value="1"/>
</dbReference>
<dbReference type="SMART" id="SM00075">
    <property type="entry name" value="HYDRO"/>
    <property type="match status" value="1"/>
</dbReference>